<evidence type="ECO:0000255" key="1"/>
<evidence type="ECO:0000305" key="2"/>
<organism>
    <name type="scientific">Mycobacterium tuberculosis (strain CDC 1551 / Oshkosh)</name>
    <dbReference type="NCBI Taxonomy" id="83331"/>
    <lineage>
        <taxon>Bacteria</taxon>
        <taxon>Bacillati</taxon>
        <taxon>Actinomycetota</taxon>
        <taxon>Actinomycetes</taxon>
        <taxon>Mycobacteriales</taxon>
        <taxon>Mycobacteriaceae</taxon>
        <taxon>Mycobacterium</taxon>
        <taxon>Mycobacterium tuberculosis complex</taxon>
    </lineage>
</organism>
<accession>P9WKY6</accession>
<accession>L0TCH3</accession>
<accession>P65083</accession>
<accession>Q50707</accession>
<sequence length="211" mass="21572">MSRVQISTVLAIDTATPAVTAGIVRRHDLVVLGERVTVDARAHAERLTPNVLAALADAALTMADLDAVVVGCGPGPFTGLRAGMASAAAYGHALGIPVYGVCSLDAIGGQTIGDTLVVTDARRREVYWARYCDGIRTVGPAVNAAADVDPGPALAVAGAPEHAALFALPCVEPSRPSPAGLVAAVNWADKPAPLVPLYLRRPDAKPLAVCT</sequence>
<reference key="1">
    <citation type="journal article" date="2002" name="J. Bacteriol.">
        <title>Whole-genome comparison of Mycobacterium tuberculosis clinical and laboratory strains.</title>
        <authorList>
            <person name="Fleischmann R.D."/>
            <person name="Alland D."/>
            <person name="Eisen J.A."/>
            <person name="Carpenter L."/>
            <person name="White O."/>
            <person name="Peterson J.D."/>
            <person name="DeBoy R.T."/>
            <person name="Dodson R.J."/>
            <person name="Gwinn M.L."/>
            <person name="Haft D.H."/>
            <person name="Hickey E.K."/>
            <person name="Kolonay J.F."/>
            <person name="Nelson W.C."/>
            <person name="Umayam L.A."/>
            <person name="Ermolaeva M.D."/>
            <person name="Salzberg S.L."/>
            <person name="Delcher A."/>
            <person name="Utterback T.R."/>
            <person name="Weidman J.F."/>
            <person name="Khouri H.M."/>
            <person name="Gill J."/>
            <person name="Mikula A."/>
            <person name="Bishai W."/>
            <person name="Jacobs W.R. Jr."/>
            <person name="Venter J.C."/>
            <person name="Fraser C.M."/>
        </authorList>
    </citation>
    <scope>NUCLEOTIDE SEQUENCE [LARGE SCALE GENOMIC DNA]</scope>
    <source>
        <strain>CDC 1551 / Oshkosh</strain>
    </source>
</reference>
<comment type="similarity">
    <text evidence="2">To M.leprae ML0378.</text>
</comment>
<comment type="sequence caution" evidence="2">
    <conflict type="erroneous initiation">
        <sequence resource="EMBL-CDS" id="AAK47868"/>
    </conflict>
</comment>
<protein>
    <recommendedName>
        <fullName>Uncharacterized protein MT3530</fullName>
    </recommendedName>
</protein>
<name>Y3421_MYCTO</name>
<dbReference type="EMBL" id="AE000516">
    <property type="protein sequence ID" value="AAK47868.1"/>
    <property type="status" value="ALT_INIT"/>
    <property type="molecule type" value="Genomic_DNA"/>
</dbReference>
<dbReference type="PIR" id="B70738">
    <property type="entry name" value="B70738"/>
</dbReference>
<dbReference type="SMR" id="P9WKY6"/>
<dbReference type="KEGG" id="mtc:MT3530"/>
<dbReference type="PATRIC" id="fig|83331.31.peg.3787"/>
<dbReference type="HOGENOM" id="CLU_064886_3_3_11"/>
<dbReference type="Proteomes" id="UP000001020">
    <property type="component" value="Chromosome"/>
</dbReference>
<dbReference type="GO" id="GO:0005829">
    <property type="term" value="C:cytosol"/>
    <property type="evidence" value="ECO:0007669"/>
    <property type="project" value="TreeGrafter"/>
</dbReference>
<dbReference type="GO" id="GO:0002949">
    <property type="term" value="P:tRNA threonylcarbamoyladenosine modification"/>
    <property type="evidence" value="ECO:0007669"/>
    <property type="project" value="InterPro"/>
</dbReference>
<dbReference type="CDD" id="cd24032">
    <property type="entry name" value="ASKHA_NBD_TsaB"/>
    <property type="match status" value="1"/>
</dbReference>
<dbReference type="Gene3D" id="3.30.420.40">
    <property type="match status" value="1"/>
</dbReference>
<dbReference type="InterPro" id="IPR043129">
    <property type="entry name" value="ATPase_NBD"/>
</dbReference>
<dbReference type="InterPro" id="IPR000905">
    <property type="entry name" value="Gcp-like_dom"/>
</dbReference>
<dbReference type="InterPro" id="IPR022496">
    <property type="entry name" value="T6A_TsaB"/>
</dbReference>
<dbReference type="NCBIfam" id="TIGR03725">
    <property type="entry name" value="T6A_YeaZ"/>
    <property type="match status" value="1"/>
</dbReference>
<dbReference type="PANTHER" id="PTHR11735">
    <property type="entry name" value="TRNA N6-ADENOSINE THREONYLCARBAMOYLTRANSFERASE"/>
    <property type="match status" value="1"/>
</dbReference>
<dbReference type="PANTHER" id="PTHR11735:SF11">
    <property type="entry name" value="TRNA THREONYLCARBAMOYLADENOSINE BIOSYNTHESIS PROTEIN TSAB"/>
    <property type="match status" value="1"/>
</dbReference>
<dbReference type="Pfam" id="PF00814">
    <property type="entry name" value="TsaD"/>
    <property type="match status" value="1"/>
</dbReference>
<dbReference type="SUPFAM" id="SSF53067">
    <property type="entry name" value="Actin-like ATPase domain"/>
    <property type="match status" value="2"/>
</dbReference>
<keyword id="KW-1185">Reference proteome</keyword>
<keyword id="KW-0732">Signal</keyword>
<gene>
    <name type="ordered locus">MT3530</name>
</gene>
<proteinExistence type="inferred from homology"/>
<feature type="signal peptide" evidence="1">
    <location>
        <begin position="1"/>
        <end position="20"/>
    </location>
</feature>
<feature type="chain" id="PRO_0000427572" description="Uncharacterized protein MT3530">
    <location>
        <begin position="21"/>
        <end position="211"/>
    </location>
</feature>